<name>KDSB_RHORT</name>
<sequence>MTQSPSLAAAAPIVVIPARMASTRLPGKPLADIHGVPMIVQVWRRAMEAGIGPVLVAAAEDEIAQAVRAAGGNAVLTDPDLPSGSDRVWQAVERFDPAGRHAVVVNVQGDLPTLDPGLIIRAVETVLAEPDIALSTLICEITREEERTNPNVVKAVVGLAEGQTRGRALYFSRATVPHGPGPHYHHIGLYAYRRTTLGAFVSLPPGVLERREKLEQLRALENHMRIEAALVDTVPLGVDTAEDLERARALLG</sequence>
<accession>Q2RPI7</accession>
<organism>
    <name type="scientific">Rhodospirillum rubrum (strain ATCC 11170 / ATH 1.1.1 / DSM 467 / LMG 4362 / NCIMB 8255 / S1)</name>
    <dbReference type="NCBI Taxonomy" id="269796"/>
    <lineage>
        <taxon>Bacteria</taxon>
        <taxon>Pseudomonadati</taxon>
        <taxon>Pseudomonadota</taxon>
        <taxon>Alphaproteobacteria</taxon>
        <taxon>Rhodospirillales</taxon>
        <taxon>Rhodospirillaceae</taxon>
        <taxon>Rhodospirillum</taxon>
    </lineage>
</organism>
<proteinExistence type="inferred from homology"/>
<comment type="function">
    <text evidence="1">Activates KDO (a required 8-carbon sugar) for incorporation into bacterial lipopolysaccharide in Gram-negative bacteria.</text>
</comment>
<comment type="catalytic activity">
    <reaction evidence="1">
        <text>3-deoxy-alpha-D-manno-oct-2-ulosonate + CTP = CMP-3-deoxy-beta-D-manno-octulosonate + diphosphate</text>
        <dbReference type="Rhea" id="RHEA:23448"/>
        <dbReference type="ChEBI" id="CHEBI:33019"/>
        <dbReference type="ChEBI" id="CHEBI:37563"/>
        <dbReference type="ChEBI" id="CHEBI:85986"/>
        <dbReference type="ChEBI" id="CHEBI:85987"/>
        <dbReference type="EC" id="2.7.7.38"/>
    </reaction>
</comment>
<comment type="pathway">
    <text evidence="1">Nucleotide-sugar biosynthesis; CMP-3-deoxy-D-manno-octulosonate biosynthesis; CMP-3-deoxy-D-manno-octulosonate from 3-deoxy-D-manno-octulosonate and CTP: step 1/1.</text>
</comment>
<comment type="pathway">
    <text evidence="1">Bacterial outer membrane biogenesis; lipopolysaccharide biosynthesis.</text>
</comment>
<comment type="subcellular location">
    <subcellularLocation>
        <location evidence="1">Cytoplasm</location>
    </subcellularLocation>
</comment>
<comment type="similarity">
    <text evidence="1">Belongs to the KdsB family.</text>
</comment>
<comment type="sequence caution" evidence="2">
    <conflict type="erroneous initiation">
        <sequence resource="EMBL-CDS" id="ABC23958"/>
    </conflict>
</comment>
<feature type="chain" id="PRO_0000370142" description="3-deoxy-manno-octulosonate cytidylyltransferase">
    <location>
        <begin position="1"/>
        <end position="252"/>
    </location>
</feature>
<evidence type="ECO:0000255" key="1">
    <source>
        <dbReference type="HAMAP-Rule" id="MF_00057"/>
    </source>
</evidence>
<evidence type="ECO:0000305" key="2"/>
<gene>
    <name evidence="1" type="primary">kdsB</name>
    <name type="ordered locus">Rru_A3163</name>
</gene>
<protein>
    <recommendedName>
        <fullName evidence="1">3-deoxy-manno-octulosonate cytidylyltransferase</fullName>
        <ecNumber evidence="1">2.7.7.38</ecNumber>
    </recommendedName>
    <alternativeName>
        <fullName evidence="1">CMP-2-keto-3-deoxyoctulosonic acid synthase</fullName>
        <shortName evidence="1">CKS</shortName>
        <shortName evidence="1">CMP-KDO synthase</shortName>
    </alternativeName>
</protein>
<reference key="1">
    <citation type="journal article" date="2011" name="Stand. Genomic Sci.">
        <title>Complete genome sequence of Rhodospirillum rubrum type strain (S1).</title>
        <authorList>
            <person name="Munk A.C."/>
            <person name="Copeland A."/>
            <person name="Lucas S."/>
            <person name="Lapidus A."/>
            <person name="Del Rio T.G."/>
            <person name="Barry K."/>
            <person name="Detter J.C."/>
            <person name="Hammon N."/>
            <person name="Israni S."/>
            <person name="Pitluck S."/>
            <person name="Brettin T."/>
            <person name="Bruce D."/>
            <person name="Han C."/>
            <person name="Tapia R."/>
            <person name="Gilna P."/>
            <person name="Schmutz J."/>
            <person name="Larimer F."/>
            <person name="Land M."/>
            <person name="Kyrpides N.C."/>
            <person name="Mavromatis K."/>
            <person name="Richardson P."/>
            <person name="Rohde M."/>
            <person name="Goeker M."/>
            <person name="Klenk H.P."/>
            <person name="Zhang Y."/>
            <person name="Roberts G.P."/>
            <person name="Reslewic S."/>
            <person name="Schwartz D.C."/>
        </authorList>
    </citation>
    <scope>NUCLEOTIDE SEQUENCE [LARGE SCALE GENOMIC DNA]</scope>
    <source>
        <strain>ATCC 11170 / ATH 1.1.1 / DSM 467 / LMG 4362 / NCIMB 8255 / S1</strain>
    </source>
</reference>
<dbReference type="EC" id="2.7.7.38" evidence="1"/>
<dbReference type="EMBL" id="CP000230">
    <property type="protein sequence ID" value="ABC23958.1"/>
    <property type="status" value="ALT_INIT"/>
    <property type="molecule type" value="Genomic_DNA"/>
</dbReference>
<dbReference type="RefSeq" id="WP_014626528.1">
    <property type="nucleotide sequence ID" value="NC_007643.1"/>
</dbReference>
<dbReference type="RefSeq" id="YP_428245.1">
    <property type="nucleotide sequence ID" value="NC_007643.1"/>
</dbReference>
<dbReference type="SMR" id="Q2RPI7"/>
<dbReference type="STRING" id="269796.Rru_A3163"/>
<dbReference type="EnsemblBacteria" id="ABC23958">
    <property type="protein sequence ID" value="ABC23958"/>
    <property type="gene ID" value="Rru_A3163"/>
</dbReference>
<dbReference type="KEGG" id="rru:Rru_A3163"/>
<dbReference type="PATRIC" id="fig|269796.9.peg.3276"/>
<dbReference type="eggNOG" id="COG1212">
    <property type="taxonomic scope" value="Bacteria"/>
</dbReference>
<dbReference type="HOGENOM" id="CLU_065038_0_1_5"/>
<dbReference type="UniPathway" id="UPA00030"/>
<dbReference type="UniPathway" id="UPA00358">
    <property type="reaction ID" value="UER00476"/>
</dbReference>
<dbReference type="Proteomes" id="UP000001929">
    <property type="component" value="Chromosome"/>
</dbReference>
<dbReference type="GO" id="GO:0005829">
    <property type="term" value="C:cytosol"/>
    <property type="evidence" value="ECO:0007669"/>
    <property type="project" value="TreeGrafter"/>
</dbReference>
<dbReference type="GO" id="GO:0008690">
    <property type="term" value="F:3-deoxy-manno-octulosonate cytidylyltransferase activity"/>
    <property type="evidence" value="ECO:0007669"/>
    <property type="project" value="UniProtKB-UniRule"/>
</dbReference>
<dbReference type="GO" id="GO:0033468">
    <property type="term" value="P:CMP-keto-3-deoxy-D-manno-octulosonic acid biosynthetic process"/>
    <property type="evidence" value="ECO:0007669"/>
    <property type="project" value="UniProtKB-UniRule"/>
</dbReference>
<dbReference type="GO" id="GO:0009103">
    <property type="term" value="P:lipopolysaccharide biosynthetic process"/>
    <property type="evidence" value="ECO:0007669"/>
    <property type="project" value="UniProtKB-UniRule"/>
</dbReference>
<dbReference type="CDD" id="cd02517">
    <property type="entry name" value="CMP-KDO-Synthetase"/>
    <property type="match status" value="1"/>
</dbReference>
<dbReference type="Gene3D" id="3.90.550.10">
    <property type="entry name" value="Spore Coat Polysaccharide Biosynthesis Protein SpsA, Chain A"/>
    <property type="match status" value="1"/>
</dbReference>
<dbReference type="HAMAP" id="MF_00057">
    <property type="entry name" value="KdsB"/>
    <property type="match status" value="1"/>
</dbReference>
<dbReference type="InterPro" id="IPR003329">
    <property type="entry name" value="Cytidylyl_trans"/>
</dbReference>
<dbReference type="InterPro" id="IPR004528">
    <property type="entry name" value="KdsB"/>
</dbReference>
<dbReference type="InterPro" id="IPR029044">
    <property type="entry name" value="Nucleotide-diphossugar_trans"/>
</dbReference>
<dbReference type="NCBIfam" id="TIGR00466">
    <property type="entry name" value="kdsB"/>
    <property type="match status" value="1"/>
</dbReference>
<dbReference type="NCBIfam" id="NF003948">
    <property type="entry name" value="PRK05450.1-1"/>
    <property type="match status" value="1"/>
</dbReference>
<dbReference type="NCBIfam" id="NF003952">
    <property type="entry name" value="PRK05450.1-5"/>
    <property type="match status" value="1"/>
</dbReference>
<dbReference type="PANTHER" id="PTHR42866">
    <property type="entry name" value="3-DEOXY-MANNO-OCTULOSONATE CYTIDYLYLTRANSFERASE"/>
    <property type="match status" value="1"/>
</dbReference>
<dbReference type="PANTHER" id="PTHR42866:SF2">
    <property type="entry name" value="3-DEOXY-MANNO-OCTULOSONATE CYTIDYLYLTRANSFERASE, MITOCHONDRIAL"/>
    <property type="match status" value="1"/>
</dbReference>
<dbReference type="Pfam" id="PF02348">
    <property type="entry name" value="CTP_transf_3"/>
    <property type="match status" value="1"/>
</dbReference>
<dbReference type="SUPFAM" id="SSF53448">
    <property type="entry name" value="Nucleotide-diphospho-sugar transferases"/>
    <property type="match status" value="1"/>
</dbReference>
<keyword id="KW-0963">Cytoplasm</keyword>
<keyword id="KW-0448">Lipopolysaccharide biosynthesis</keyword>
<keyword id="KW-0548">Nucleotidyltransferase</keyword>
<keyword id="KW-1185">Reference proteome</keyword>
<keyword id="KW-0808">Transferase</keyword>